<protein>
    <recommendedName>
        <fullName evidence="1">3-deoxy-D-manno-octulosonic acid kinase</fullName>
        <shortName evidence="1">Kdo kinase</shortName>
        <ecNumber evidence="1">2.7.1.166</ecNumber>
    </recommendedName>
</protein>
<evidence type="ECO:0000255" key="1">
    <source>
        <dbReference type="HAMAP-Rule" id="MF_00521"/>
    </source>
</evidence>
<evidence type="ECO:0000305" key="2"/>
<comment type="function">
    <text evidence="1">Catalyzes the ATP-dependent phosphorylation of the 3-deoxy-D-manno-octulosonic acid (Kdo) residue in Kdo-lipid IV(A) at the 4-OH position.</text>
</comment>
<comment type="catalytic activity">
    <reaction evidence="1">
        <text>an alpha-Kdo-(2-&gt;6)-lipid IVA + ATP = a 4-O-phospho-alpha-Kdo-(2-&gt;6)-lipid IVA + ADP + H(+)</text>
        <dbReference type="Rhea" id="RHEA:74271"/>
        <dbReference type="ChEBI" id="CHEBI:15378"/>
        <dbReference type="ChEBI" id="CHEBI:30616"/>
        <dbReference type="ChEBI" id="CHEBI:176428"/>
        <dbReference type="ChEBI" id="CHEBI:193140"/>
        <dbReference type="ChEBI" id="CHEBI:456216"/>
        <dbReference type="EC" id="2.7.1.166"/>
    </reaction>
</comment>
<comment type="pathway">
    <text evidence="1">Bacterial outer membrane biogenesis; LPS core biosynthesis.</text>
</comment>
<comment type="subcellular location">
    <subcellularLocation>
        <location evidence="1">Cell inner membrane</location>
        <topology evidence="1">Peripheral membrane protein</topology>
        <orientation evidence="1">Cytoplasmic side</orientation>
    </subcellularLocation>
</comment>
<comment type="similarity">
    <text evidence="1">Belongs to the protein kinase superfamily. KdkA/RfaP family.</text>
</comment>
<comment type="sequence caution" evidence="2">
    <conflict type="erroneous initiation">
        <sequence resource="EMBL-CDS" id="AAO29063"/>
    </conflict>
</comment>
<accession>Q87C81</accession>
<dbReference type="EC" id="2.7.1.166" evidence="1"/>
<dbReference type="EMBL" id="AE009442">
    <property type="protein sequence ID" value="AAO29063.1"/>
    <property type="status" value="ALT_INIT"/>
    <property type="molecule type" value="Genomic_DNA"/>
</dbReference>
<dbReference type="RefSeq" id="WP_004088627.1">
    <property type="nucleotide sequence ID" value="NC_004556.1"/>
</dbReference>
<dbReference type="KEGG" id="xft:PD_1213"/>
<dbReference type="HOGENOM" id="CLU_094226_0_0_6"/>
<dbReference type="UniPathway" id="UPA00958"/>
<dbReference type="Proteomes" id="UP000002516">
    <property type="component" value="Chromosome"/>
</dbReference>
<dbReference type="GO" id="GO:0005886">
    <property type="term" value="C:plasma membrane"/>
    <property type="evidence" value="ECO:0007669"/>
    <property type="project" value="UniProtKB-SubCell"/>
</dbReference>
<dbReference type="GO" id="GO:0005524">
    <property type="term" value="F:ATP binding"/>
    <property type="evidence" value="ECO:0007669"/>
    <property type="project" value="UniProtKB-UniRule"/>
</dbReference>
<dbReference type="GO" id="GO:0016301">
    <property type="term" value="F:kinase activity"/>
    <property type="evidence" value="ECO:0007669"/>
    <property type="project" value="UniProtKB-KW"/>
</dbReference>
<dbReference type="GO" id="GO:0016773">
    <property type="term" value="F:phosphotransferase activity, alcohol group as acceptor"/>
    <property type="evidence" value="ECO:0007669"/>
    <property type="project" value="UniProtKB-UniRule"/>
</dbReference>
<dbReference type="GO" id="GO:0009244">
    <property type="term" value="P:lipopolysaccharide core region biosynthetic process"/>
    <property type="evidence" value="ECO:0007669"/>
    <property type="project" value="UniProtKB-UniRule"/>
</dbReference>
<dbReference type="Gene3D" id="1.10.510.10">
    <property type="entry name" value="Transferase(Phosphotransferase) domain 1"/>
    <property type="match status" value="1"/>
</dbReference>
<dbReference type="HAMAP" id="MF_00521">
    <property type="entry name" value="KDO_kinase"/>
    <property type="match status" value="1"/>
</dbReference>
<dbReference type="InterPro" id="IPR022826">
    <property type="entry name" value="KDO_kinase"/>
</dbReference>
<dbReference type="InterPro" id="IPR011009">
    <property type="entry name" value="Kinase-like_dom_sf"/>
</dbReference>
<dbReference type="NCBIfam" id="NF002475">
    <property type="entry name" value="PRK01723.1"/>
    <property type="match status" value="1"/>
</dbReference>
<dbReference type="Pfam" id="PF06293">
    <property type="entry name" value="Kdo"/>
    <property type="match status" value="1"/>
</dbReference>
<dbReference type="SUPFAM" id="SSF56112">
    <property type="entry name" value="Protein kinase-like (PK-like)"/>
    <property type="match status" value="1"/>
</dbReference>
<proteinExistence type="inferred from homology"/>
<sequence>MVAFDANEILTPFCEGHREGAILFDCQRMRQVEYGLFVPAWWGERAHPISEGGRGSAWFVEASFGNAVLRQYRRGGMIAMLNRDRYFWCGGHRTRSVLEFRLMRELISRGLPVPTPLAACYVRHGVQYRAAILMERLEGVSSLAMCVRGNSKEIHWEQIGRMISRFHREGLDHADLNAHNILLDQAGQCWLIDFDRGALRIPATKWREHNLARLLRSLLKIRGERSVDAVYRDFERLCRAYDLAWGRGC</sequence>
<keyword id="KW-0067">ATP-binding</keyword>
<keyword id="KW-0997">Cell inner membrane</keyword>
<keyword id="KW-1003">Cell membrane</keyword>
<keyword id="KW-0418">Kinase</keyword>
<keyword id="KW-0448">Lipopolysaccharide biosynthesis</keyword>
<keyword id="KW-0472">Membrane</keyword>
<keyword id="KW-0547">Nucleotide-binding</keyword>
<keyword id="KW-1185">Reference proteome</keyword>
<keyword id="KW-0808">Transferase</keyword>
<name>KDKA_XYLFT</name>
<feature type="chain" id="PRO_0000194323" description="3-deoxy-D-manno-octulosonic acid kinase">
    <location>
        <begin position="1"/>
        <end position="249"/>
    </location>
</feature>
<feature type="active site" evidence="1">
    <location>
        <position position="175"/>
    </location>
</feature>
<gene>
    <name evidence="1" type="primary">kdkA</name>
    <name type="ordered locus">PD_1213</name>
</gene>
<reference key="1">
    <citation type="journal article" date="2003" name="J. Bacteriol.">
        <title>Comparative analyses of the complete genome sequences of Pierce's disease and citrus variegated chlorosis strains of Xylella fastidiosa.</title>
        <authorList>
            <person name="Van Sluys M.A."/>
            <person name="de Oliveira M.C."/>
            <person name="Monteiro-Vitorello C.B."/>
            <person name="Miyaki C.Y."/>
            <person name="Furlan L.R."/>
            <person name="Camargo L.E.A."/>
            <person name="da Silva A.C.R."/>
            <person name="Moon D.H."/>
            <person name="Takita M.A."/>
            <person name="Lemos E.G.M."/>
            <person name="Machado M.A."/>
            <person name="Ferro M.I.T."/>
            <person name="da Silva F.R."/>
            <person name="Goldman M.H.S."/>
            <person name="Goldman G.H."/>
            <person name="Lemos M.V.F."/>
            <person name="El-Dorry H."/>
            <person name="Tsai S.M."/>
            <person name="Carrer H."/>
            <person name="Carraro D.M."/>
            <person name="de Oliveira R.C."/>
            <person name="Nunes L.R."/>
            <person name="Siqueira W.J."/>
            <person name="Coutinho L.L."/>
            <person name="Kimura E.T."/>
            <person name="Ferro E.S."/>
            <person name="Harakava R."/>
            <person name="Kuramae E.E."/>
            <person name="Marino C.L."/>
            <person name="Giglioti E."/>
            <person name="Abreu I.L."/>
            <person name="Alves L.M.C."/>
            <person name="do Amaral A.M."/>
            <person name="Baia G.S."/>
            <person name="Blanco S.R."/>
            <person name="Brito M.S."/>
            <person name="Cannavan F.S."/>
            <person name="Celestino A.V."/>
            <person name="da Cunha A.F."/>
            <person name="Fenille R.C."/>
            <person name="Ferro J.A."/>
            <person name="Formighieri E.F."/>
            <person name="Kishi L.T."/>
            <person name="Leoni S.G."/>
            <person name="Oliveira A.R."/>
            <person name="Rosa V.E. Jr."/>
            <person name="Sassaki F.T."/>
            <person name="Sena J.A.D."/>
            <person name="de Souza A.A."/>
            <person name="Truffi D."/>
            <person name="Tsukumo F."/>
            <person name="Yanai G.M."/>
            <person name="Zaros L.G."/>
            <person name="Civerolo E.L."/>
            <person name="Simpson A.J.G."/>
            <person name="Almeida N.F. Jr."/>
            <person name="Setubal J.C."/>
            <person name="Kitajima J.P."/>
        </authorList>
    </citation>
    <scope>NUCLEOTIDE SEQUENCE [LARGE SCALE GENOMIC DNA]</scope>
    <source>
        <strain>Temecula1 / ATCC 700964</strain>
    </source>
</reference>
<organism>
    <name type="scientific">Xylella fastidiosa (strain Temecula1 / ATCC 700964)</name>
    <dbReference type="NCBI Taxonomy" id="183190"/>
    <lineage>
        <taxon>Bacteria</taxon>
        <taxon>Pseudomonadati</taxon>
        <taxon>Pseudomonadota</taxon>
        <taxon>Gammaproteobacteria</taxon>
        <taxon>Lysobacterales</taxon>
        <taxon>Lysobacteraceae</taxon>
        <taxon>Xylella</taxon>
    </lineage>
</organism>